<name>Y2234_OCEIH</name>
<protein>
    <recommendedName>
        <fullName evidence="1">UPF0354 protein OB2234</fullName>
    </recommendedName>
</protein>
<evidence type="ECO:0000255" key="1">
    <source>
        <dbReference type="HAMAP-Rule" id="MF_01548"/>
    </source>
</evidence>
<reference key="1">
    <citation type="journal article" date="2002" name="Nucleic Acids Res.">
        <title>Genome sequence of Oceanobacillus iheyensis isolated from the Iheya Ridge and its unexpected adaptive capabilities to extreme environments.</title>
        <authorList>
            <person name="Takami H."/>
            <person name="Takaki Y."/>
            <person name="Uchiyama I."/>
        </authorList>
    </citation>
    <scope>NUCLEOTIDE SEQUENCE [LARGE SCALE GENOMIC DNA]</scope>
    <source>
        <strain>DSM 14371 / CIP 107618 / JCM 11309 / KCTC 3954 / HTE831</strain>
    </source>
</reference>
<sequence length="268" mass="31218">MAKMTTIKMKRLLEDRLKNPEYRIVYKRDDDALRIEWRDSGQGMTVSLPNLITKYNNRGDIAIQEMEEHIIEALKIMNETHHLQGMEKHIFPVLRSPSFPIETKAGKKLIYKDHTAETRVFYALDLGKSYRLIDEELLKEEEWTLDRLDEIASFNVRSLSHEVKKDQVADNDFYFLATQDGYDASRILNEAFLEEMKANAQGELTVAVPHQDVLIIADIQNKMGYDILAQMTMKFFAEGRIPITSLSFVYEDRKLEPIFILAKNKPEK</sequence>
<dbReference type="EMBL" id="BA000028">
    <property type="protein sequence ID" value="BAC14190.1"/>
    <property type="molecule type" value="Genomic_DNA"/>
</dbReference>
<dbReference type="RefSeq" id="WP_011066628.1">
    <property type="nucleotide sequence ID" value="NC_004193.1"/>
</dbReference>
<dbReference type="STRING" id="221109.gene:10734482"/>
<dbReference type="KEGG" id="oih:OB2234"/>
<dbReference type="eggNOG" id="COG4848">
    <property type="taxonomic scope" value="Bacteria"/>
</dbReference>
<dbReference type="HOGENOM" id="CLU_085634_0_0_9"/>
<dbReference type="OrthoDB" id="154553at2"/>
<dbReference type="PhylomeDB" id="Q8EP82"/>
<dbReference type="Proteomes" id="UP000000822">
    <property type="component" value="Chromosome"/>
</dbReference>
<dbReference type="HAMAP" id="MF_01548">
    <property type="entry name" value="UPF0354"/>
    <property type="match status" value="1"/>
</dbReference>
<dbReference type="InterPro" id="IPR010838">
    <property type="entry name" value="DUF1444"/>
</dbReference>
<dbReference type="NCBIfam" id="NF010189">
    <property type="entry name" value="PRK13668.1"/>
    <property type="match status" value="1"/>
</dbReference>
<dbReference type="Pfam" id="PF07285">
    <property type="entry name" value="DUF1444"/>
    <property type="match status" value="1"/>
</dbReference>
<dbReference type="PIRSF" id="PIRSF012562">
    <property type="entry name" value="UCP012562"/>
    <property type="match status" value="1"/>
</dbReference>
<gene>
    <name type="ordered locus">OB2234</name>
</gene>
<comment type="similarity">
    <text evidence="1">Belongs to the UPF0354 family.</text>
</comment>
<proteinExistence type="inferred from homology"/>
<accession>Q8EP82</accession>
<organism>
    <name type="scientific">Oceanobacillus iheyensis (strain DSM 14371 / CIP 107618 / JCM 11309 / KCTC 3954 / HTE831)</name>
    <dbReference type="NCBI Taxonomy" id="221109"/>
    <lineage>
        <taxon>Bacteria</taxon>
        <taxon>Bacillati</taxon>
        <taxon>Bacillota</taxon>
        <taxon>Bacilli</taxon>
        <taxon>Bacillales</taxon>
        <taxon>Bacillaceae</taxon>
        <taxon>Oceanobacillus</taxon>
    </lineage>
</organism>
<feature type="chain" id="PRO_0000171106" description="UPF0354 protein OB2234">
    <location>
        <begin position="1"/>
        <end position="268"/>
    </location>
</feature>
<keyword id="KW-1185">Reference proteome</keyword>